<evidence type="ECO:0000250" key="1"/>
<evidence type="ECO:0000250" key="2">
    <source>
        <dbReference type="UniProtKB" id="P45656"/>
    </source>
</evidence>
<evidence type="ECO:0000255" key="3"/>
<evidence type="ECO:0000255" key="4">
    <source>
        <dbReference type="RuleBase" id="RU000635"/>
    </source>
</evidence>
<evidence type="ECO:0000269" key="5">
    <source>
    </source>
</evidence>
<evidence type="ECO:0000305" key="6"/>
<evidence type="ECO:0000312" key="7">
    <source>
        <dbReference type="EMBL" id="AAL05972.1"/>
    </source>
</evidence>
<proteinExistence type="evidence at transcript level"/>
<sequence>MSRHVTVVLLLAIVLLLSSHMIHGQHWSYGLRPGGKREVESLQESYAEVPNEVSFTELQHLECSIPQNRISLVRDALMNWLEGENARKKI</sequence>
<reference evidence="6" key="1">
    <citation type="journal article" date="2001" name="J. Exp. Zool.">
        <title>Cloning and characterization of cDNAs encoding the GnRH1 and GnRH2 precursors from bullfrog (Rana catesbeiana).</title>
        <authorList>
            <person name="Wang L."/>
            <person name="Yoo M.S."/>
            <person name="Kang H.M."/>
            <person name="Im W.B."/>
            <person name="Choi H.S."/>
            <person name="Bogerd J."/>
            <person name="Kwon H.B."/>
        </authorList>
    </citation>
    <scope>NUCLEOTIDE SEQUENCE [MRNA]</scope>
    <scope>TISSUE SPECIFICITY</scope>
    <scope>DEVELOPMENTAL STAGE</scope>
    <source>
        <tissue>Forebrain</tissue>
    </source>
</reference>
<protein>
    <recommendedName>
        <fullName>Progonadoliberin-1</fullName>
    </recommendedName>
    <alternativeName>
        <fullName>Progonadoliberin I</fullName>
    </alternativeName>
    <component>
        <recommendedName>
            <fullName>Gonadoliberin-1</fullName>
        </recommendedName>
        <alternativeName>
            <fullName>Gonadoliberin I</fullName>
        </alternativeName>
        <alternativeName>
            <fullName>Gonadotropin-releasing hormone I</fullName>
            <shortName>GnRH I</shortName>
        </alternativeName>
        <alternativeName>
            <fullName>LHRH I</fullName>
        </alternativeName>
        <alternativeName>
            <fullName>Luliberin I</fullName>
        </alternativeName>
        <alternativeName>
            <fullName>Luteinizing hormone-releasing hormone I</fullName>
        </alternativeName>
    </component>
    <component>
        <recommendedName>
            <fullName>GnRH-associated peptide 1</fullName>
        </recommendedName>
        <alternativeName>
            <fullName>GAP1</fullName>
        </alternativeName>
        <alternativeName>
            <fullName>GnRH-associated peptide I</fullName>
        </alternativeName>
    </component>
</protein>
<organism evidence="7">
    <name type="scientific">Aquarana catesbeiana</name>
    <name type="common">American bullfrog</name>
    <name type="synonym">Rana catesbeiana</name>
    <dbReference type="NCBI Taxonomy" id="8400"/>
    <lineage>
        <taxon>Eukaryota</taxon>
        <taxon>Metazoa</taxon>
        <taxon>Chordata</taxon>
        <taxon>Craniata</taxon>
        <taxon>Vertebrata</taxon>
        <taxon>Euteleostomi</taxon>
        <taxon>Amphibia</taxon>
        <taxon>Batrachia</taxon>
        <taxon>Anura</taxon>
        <taxon>Neobatrachia</taxon>
        <taxon>Ranoidea</taxon>
        <taxon>Ranidae</taxon>
        <taxon>Aquarana</taxon>
    </lineage>
</organism>
<feature type="signal peptide" evidence="3">
    <location>
        <begin position="1"/>
        <end position="24"/>
    </location>
</feature>
<feature type="chain" id="PRO_0000012544" description="Progonadoliberin-1">
    <location>
        <begin position="25"/>
        <end position="90"/>
    </location>
</feature>
<feature type="peptide" id="PRO_0000012545" description="Gonadoliberin-1">
    <location>
        <begin position="25"/>
        <end position="34"/>
    </location>
</feature>
<feature type="peptide" id="PRO_0000012546" description="GnRH-associated peptide 1" evidence="1">
    <location>
        <begin position="38"/>
        <end position="86"/>
    </location>
</feature>
<feature type="modified residue" description="Pyrrolidone carboxylic acid" evidence="1">
    <location>
        <position position="25"/>
    </location>
</feature>
<feature type="modified residue" description="Glycine amide" evidence="1">
    <location>
        <position position="34"/>
    </location>
</feature>
<dbReference type="EMBL" id="AF188754">
    <property type="protein sequence ID" value="AAL05972.1"/>
    <property type="molecule type" value="mRNA"/>
</dbReference>
<dbReference type="GO" id="GO:0005615">
    <property type="term" value="C:extracellular space"/>
    <property type="evidence" value="ECO:0000250"/>
    <property type="project" value="UniProtKB"/>
</dbReference>
<dbReference type="GO" id="GO:0005183">
    <property type="term" value="F:gonadotropin hormone-releasing hormone activity"/>
    <property type="evidence" value="ECO:0000303"/>
    <property type="project" value="UniProtKB"/>
</dbReference>
<dbReference type="GO" id="GO:0009755">
    <property type="term" value="P:hormone-mediated signaling pathway"/>
    <property type="evidence" value="ECO:0000303"/>
    <property type="project" value="UniProtKB"/>
</dbReference>
<dbReference type="GO" id="GO:0022414">
    <property type="term" value="P:reproductive process"/>
    <property type="evidence" value="ECO:0000303"/>
    <property type="project" value="UniProtKB"/>
</dbReference>
<dbReference type="InterPro" id="IPR002012">
    <property type="entry name" value="GnRH"/>
</dbReference>
<dbReference type="InterPro" id="IPR019792">
    <property type="entry name" value="Gonadoliberin"/>
</dbReference>
<dbReference type="InterPro" id="IPR004079">
    <property type="entry name" value="Gonadoliberin_I_precursor"/>
</dbReference>
<dbReference type="PANTHER" id="PTHR10522">
    <property type="entry name" value="GONADOLIBERIN"/>
    <property type="match status" value="1"/>
</dbReference>
<dbReference type="PANTHER" id="PTHR10522:SF5">
    <property type="entry name" value="PREPROGONADOTROPIN-RELEASING HORMONE 2"/>
    <property type="match status" value="1"/>
</dbReference>
<dbReference type="Pfam" id="PF00446">
    <property type="entry name" value="GnRH"/>
    <property type="match status" value="1"/>
</dbReference>
<dbReference type="PRINTS" id="PR01541">
    <property type="entry name" value="GONADOLIBRNI"/>
</dbReference>
<dbReference type="PROSITE" id="PS00473">
    <property type="entry name" value="GNRH"/>
    <property type="match status" value="1"/>
</dbReference>
<accession>Q90Y63</accession>
<comment type="function">
    <text evidence="4 6">Stimulates the secretion of gonadotropins.</text>
</comment>
<comment type="subcellular location">
    <subcellularLocation>
        <location evidence="2">Secreted</location>
    </subcellularLocation>
</comment>
<comment type="tissue specificity">
    <text evidence="5">Forebrain.</text>
</comment>
<comment type="developmental stage">
    <text evidence="5">Expressed at significantly higher levels during post-breeding. Not expressed in pituitary.</text>
</comment>
<comment type="similarity">
    <text evidence="6">Belongs to the GnRH family.</text>
</comment>
<name>GON1_AQUCT</name>
<keyword id="KW-0027">Amidation</keyword>
<keyword id="KW-0165">Cleavage on pair of basic residues</keyword>
<keyword id="KW-0372">Hormone</keyword>
<keyword id="KW-0873">Pyrrolidone carboxylic acid</keyword>
<keyword id="KW-0964">Secreted</keyword>
<keyword id="KW-0732">Signal</keyword>
<gene>
    <name type="primary">gnrh1</name>
    <name type="synonym">gnrh</name>
</gene>